<reference key="1">
    <citation type="journal article" date="2004" name="Science">
        <title>The complete genome sequence of Propionibacterium acnes, a commensal of human skin.</title>
        <authorList>
            <person name="Brueggemann H."/>
            <person name="Henne A."/>
            <person name="Hoster F."/>
            <person name="Liesegang H."/>
            <person name="Wiezer A."/>
            <person name="Strittmatter A."/>
            <person name="Hujer S."/>
            <person name="Duerre P."/>
            <person name="Gottschalk G."/>
        </authorList>
    </citation>
    <scope>NUCLEOTIDE SEQUENCE [LARGE SCALE GENOMIC DNA]</scope>
    <source>
        <strain>DSM 16379 / KPA171202</strain>
    </source>
</reference>
<keyword id="KW-0002">3D-structure</keyword>
<keyword id="KW-0687">Ribonucleoprotein</keyword>
<keyword id="KW-0689">Ribosomal protein</keyword>
<gene>
    <name evidence="1" type="primary">rpsI</name>
    <name type="ordered locus">PPA1802</name>
</gene>
<proteinExistence type="evidence at protein level"/>
<feature type="chain" id="PRO_1000051283" description="Small ribosomal subunit protein uS9">
    <location>
        <begin position="1"/>
        <end position="173"/>
    </location>
</feature>
<feature type="region of interest" description="Disordered" evidence="2">
    <location>
        <begin position="1"/>
        <end position="26"/>
    </location>
</feature>
<feature type="region of interest" description="Disordered" evidence="2">
    <location>
        <begin position="135"/>
        <end position="173"/>
    </location>
</feature>
<feature type="compositionally biased region" description="Polar residues" evidence="2">
    <location>
        <begin position="1"/>
        <end position="15"/>
    </location>
</feature>
<feature type="compositionally biased region" description="Basic residues" evidence="2">
    <location>
        <begin position="154"/>
        <end position="173"/>
    </location>
</feature>
<feature type="strand" evidence="4">
    <location>
        <begin position="48"/>
        <end position="53"/>
    </location>
</feature>
<feature type="strand" evidence="4">
    <location>
        <begin position="58"/>
        <end position="67"/>
    </location>
</feature>
<feature type="strand" evidence="4">
    <location>
        <begin position="70"/>
        <end position="72"/>
    </location>
</feature>
<feature type="helix" evidence="4">
    <location>
        <begin position="77"/>
        <end position="80"/>
    </location>
</feature>
<feature type="helix" evidence="4">
    <location>
        <begin position="88"/>
        <end position="96"/>
    </location>
</feature>
<feature type="strand" evidence="4">
    <location>
        <begin position="101"/>
        <end position="112"/>
    </location>
</feature>
<feature type="helix" evidence="4">
    <location>
        <begin position="114"/>
        <end position="132"/>
    </location>
</feature>
<feature type="turn" evidence="4">
    <location>
        <begin position="134"/>
        <end position="137"/>
    </location>
</feature>
<feature type="helix" evidence="4">
    <location>
        <begin position="138"/>
        <end position="143"/>
    </location>
</feature>
<feature type="strand" evidence="4">
    <location>
        <begin position="161"/>
        <end position="165"/>
    </location>
</feature>
<organism>
    <name type="scientific">Cutibacterium acnes (strain DSM 16379 / KPA171202)</name>
    <name type="common">Propionibacterium acnes</name>
    <dbReference type="NCBI Taxonomy" id="267747"/>
    <lineage>
        <taxon>Bacteria</taxon>
        <taxon>Bacillati</taxon>
        <taxon>Actinomycetota</taxon>
        <taxon>Actinomycetes</taxon>
        <taxon>Propionibacteriales</taxon>
        <taxon>Propionibacteriaceae</taxon>
        <taxon>Cutibacterium</taxon>
    </lineage>
</organism>
<sequence length="173" mass="18611">MTDTPTENLENTEVTPFTEGDREIAYRTDSNPTVAAGDSKRPAMIAPGAATGRRKEAIARVRIIPGSGQWKINGRTLEDYFPNKVHQQIVTEPFATAGVEGAYDVIARIGGGGVTGQAGALRLGIARALNNVDPEASRPALKKAGMLTRDARVKERKKAGLKKARKAPQYSKR</sequence>
<protein>
    <recommendedName>
        <fullName evidence="1">Small ribosomal subunit protein uS9</fullName>
    </recommendedName>
    <alternativeName>
        <fullName evidence="3">30S ribosomal protein S9</fullName>
    </alternativeName>
</protein>
<name>RS9_CUTAK</name>
<dbReference type="EMBL" id="AE017283">
    <property type="protein sequence ID" value="AAT83529.1"/>
    <property type="molecule type" value="Genomic_DNA"/>
</dbReference>
<dbReference type="RefSeq" id="WP_002523480.1">
    <property type="nucleotide sequence ID" value="NZ_CP025935.1"/>
</dbReference>
<dbReference type="PDB" id="8CVO">
    <property type="method" value="EM"/>
    <property type="resolution" value="2.95 A"/>
    <property type="chains" value="J=1-173"/>
</dbReference>
<dbReference type="PDBsum" id="8CVO"/>
<dbReference type="SMR" id="Q6A6T4"/>
<dbReference type="EnsemblBacteria" id="AAT83529">
    <property type="protein sequence ID" value="AAT83529"/>
    <property type="gene ID" value="PPA1802"/>
</dbReference>
<dbReference type="KEGG" id="pac:PPA1802"/>
<dbReference type="eggNOG" id="COG0103">
    <property type="taxonomic scope" value="Bacteria"/>
</dbReference>
<dbReference type="HOGENOM" id="CLU_046483_2_0_11"/>
<dbReference type="Proteomes" id="UP000000603">
    <property type="component" value="Chromosome"/>
</dbReference>
<dbReference type="GO" id="GO:0005737">
    <property type="term" value="C:cytoplasm"/>
    <property type="evidence" value="ECO:0007669"/>
    <property type="project" value="UniProtKB-ARBA"/>
</dbReference>
<dbReference type="GO" id="GO:0015935">
    <property type="term" value="C:small ribosomal subunit"/>
    <property type="evidence" value="ECO:0007669"/>
    <property type="project" value="TreeGrafter"/>
</dbReference>
<dbReference type="GO" id="GO:0003723">
    <property type="term" value="F:RNA binding"/>
    <property type="evidence" value="ECO:0007669"/>
    <property type="project" value="TreeGrafter"/>
</dbReference>
<dbReference type="GO" id="GO:0003735">
    <property type="term" value="F:structural constituent of ribosome"/>
    <property type="evidence" value="ECO:0007669"/>
    <property type="project" value="InterPro"/>
</dbReference>
<dbReference type="GO" id="GO:0006412">
    <property type="term" value="P:translation"/>
    <property type="evidence" value="ECO:0007669"/>
    <property type="project" value="UniProtKB-UniRule"/>
</dbReference>
<dbReference type="FunFam" id="3.30.230.10:FF:000001">
    <property type="entry name" value="30S ribosomal protein S9"/>
    <property type="match status" value="1"/>
</dbReference>
<dbReference type="Gene3D" id="3.30.230.10">
    <property type="match status" value="1"/>
</dbReference>
<dbReference type="HAMAP" id="MF_00532_B">
    <property type="entry name" value="Ribosomal_uS9_B"/>
    <property type="match status" value="1"/>
</dbReference>
<dbReference type="InterPro" id="IPR020568">
    <property type="entry name" value="Ribosomal_Su5_D2-typ_SF"/>
</dbReference>
<dbReference type="InterPro" id="IPR000754">
    <property type="entry name" value="Ribosomal_uS9"/>
</dbReference>
<dbReference type="InterPro" id="IPR023035">
    <property type="entry name" value="Ribosomal_uS9_bac/plastid"/>
</dbReference>
<dbReference type="InterPro" id="IPR020574">
    <property type="entry name" value="Ribosomal_uS9_CS"/>
</dbReference>
<dbReference type="InterPro" id="IPR014721">
    <property type="entry name" value="Ribsml_uS5_D2-typ_fold_subgr"/>
</dbReference>
<dbReference type="NCBIfam" id="NF001099">
    <property type="entry name" value="PRK00132.1"/>
    <property type="match status" value="1"/>
</dbReference>
<dbReference type="PANTHER" id="PTHR21569">
    <property type="entry name" value="RIBOSOMAL PROTEIN S9"/>
    <property type="match status" value="1"/>
</dbReference>
<dbReference type="PANTHER" id="PTHR21569:SF1">
    <property type="entry name" value="SMALL RIBOSOMAL SUBUNIT PROTEIN US9M"/>
    <property type="match status" value="1"/>
</dbReference>
<dbReference type="Pfam" id="PF00380">
    <property type="entry name" value="Ribosomal_S9"/>
    <property type="match status" value="1"/>
</dbReference>
<dbReference type="SUPFAM" id="SSF54211">
    <property type="entry name" value="Ribosomal protein S5 domain 2-like"/>
    <property type="match status" value="1"/>
</dbReference>
<dbReference type="PROSITE" id="PS00360">
    <property type="entry name" value="RIBOSOMAL_S9"/>
    <property type="match status" value="1"/>
</dbReference>
<accession>Q6A6T4</accession>
<comment type="similarity">
    <text evidence="1">Belongs to the universal ribosomal protein uS9 family.</text>
</comment>
<evidence type="ECO:0000255" key="1">
    <source>
        <dbReference type="HAMAP-Rule" id="MF_00532"/>
    </source>
</evidence>
<evidence type="ECO:0000256" key="2">
    <source>
        <dbReference type="SAM" id="MobiDB-lite"/>
    </source>
</evidence>
<evidence type="ECO:0000305" key="3"/>
<evidence type="ECO:0007829" key="4">
    <source>
        <dbReference type="PDB" id="8CVO"/>
    </source>
</evidence>